<comment type="function">
    <text evidence="1">One of the early assembly proteins it binds 23S rRNA. One of the proteins that surrounds the polypeptide exit tunnel on the outside of the ribosome. Forms the main docking site for trigger factor binding to the ribosome.</text>
</comment>
<comment type="subunit">
    <text evidence="1">Part of the 50S ribosomal subunit. Contacts protein L29, and trigger factor when it is bound to the ribosome.</text>
</comment>
<comment type="similarity">
    <text evidence="1">Belongs to the universal ribosomal protein uL23 family.</text>
</comment>
<keyword id="KW-0687">Ribonucleoprotein</keyword>
<keyword id="KW-0689">Ribosomal protein</keyword>
<keyword id="KW-0694">RNA-binding</keyword>
<keyword id="KW-0699">rRNA-binding</keyword>
<sequence length="94" mass="10916">MDARDIIKRPVVTEESTSILDDKKYTFEVDTRATKTQVKYAVEEIFDVKVAKVNVMNYKGKLKRMGRYAGYTNKRRKAIVTVTADSKEIQFFEV</sequence>
<organism>
    <name type="scientific">Listeria monocytogenes serotype 4b (strain F2365)</name>
    <dbReference type="NCBI Taxonomy" id="265669"/>
    <lineage>
        <taxon>Bacteria</taxon>
        <taxon>Bacillati</taxon>
        <taxon>Bacillota</taxon>
        <taxon>Bacilli</taxon>
        <taxon>Bacillales</taxon>
        <taxon>Listeriaceae</taxon>
        <taxon>Listeria</taxon>
    </lineage>
</organism>
<feature type="chain" id="PRO_1000068102" description="Large ribosomal subunit protein uL23">
    <location>
        <begin position="1"/>
        <end position="94"/>
    </location>
</feature>
<proteinExistence type="inferred from homology"/>
<protein>
    <recommendedName>
        <fullName evidence="1">Large ribosomal subunit protein uL23</fullName>
    </recommendedName>
    <alternativeName>
        <fullName evidence="2">50S ribosomal protein L23</fullName>
    </alternativeName>
</protein>
<accession>Q71WE8</accession>
<gene>
    <name evidence="1" type="primary">rplW</name>
    <name type="ordered locus">LMOf2365_2603</name>
</gene>
<evidence type="ECO:0000255" key="1">
    <source>
        <dbReference type="HAMAP-Rule" id="MF_01369"/>
    </source>
</evidence>
<evidence type="ECO:0000305" key="2"/>
<reference key="1">
    <citation type="journal article" date="2004" name="Nucleic Acids Res.">
        <title>Whole genome comparisons of serotype 4b and 1/2a strains of the food-borne pathogen Listeria monocytogenes reveal new insights into the core genome components of this species.</title>
        <authorList>
            <person name="Nelson K.E."/>
            <person name="Fouts D.E."/>
            <person name="Mongodin E.F."/>
            <person name="Ravel J."/>
            <person name="DeBoy R.T."/>
            <person name="Kolonay J.F."/>
            <person name="Rasko D.A."/>
            <person name="Angiuoli S.V."/>
            <person name="Gill S.R."/>
            <person name="Paulsen I.T."/>
            <person name="Peterson J.D."/>
            <person name="White O."/>
            <person name="Nelson W.C."/>
            <person name="Nierman W.C."/>
            <person name="Beanan M.J."/>
            <person name="Brinkac L.M."/>
            <person name="Daugherty S.C."/>
            <person name="Dodson R.J."/>
            <person name="Durkin A.S."/>
            <person name="Madupu R."/>
            <person name="Haft D.H."/>
            <person name="Selengut J."/>
            <person name="Van Aken S.E."/>
            <person name="Khouri H.M."/>
            <person name="Fedorova N."/>
            <person name="Forberger H.A."/>
            <person name="Tran B."/>
            <person name="Kathariou S."/>
            <person name="Wonderling L.D."/>
            <person name="Uhlich G.A."/>
            <person name="Bayles D.O."/>
            <person name="Luchansky J.B."/>
            <person name="Fraser C.M."/>
        </authorList>
    </citation>
    <scope>NUCLEOTIDE SEQUENCE [LARGE SCALE GENOMIC DNA]</scope>
    <source>
        <strain>F2365</strain>
    </source>
</reference>
<dbReference type="EMBL" id="AE017262">
    <property type="protein sequence ID" value="AAT05368.1"/>
    <property type="molecule type" value="Genomic_DNA"/>
</dbReference>
<dbReference type="RefSeq" id="WP_003720948.1">
    <property type="nucleotide sequence ID" value="NC_002973.6"/>
</dbReference>
<dbReference type="SMR" id="Q71WE8"/>
<dbReference type="GeneID" id="32488625"/>
<dbReference type="KEGG" id="lmf:LMOf2365_2603"/>
<dbReference type="HOGENOM" id="CLU_037562_3_2_9"/>
<dbReference type="GO" id="GO:1990904">
    <property type="term" value="C:ribonucleoprotein complex"/>
    <property type="evidence" value="ECO:0007669"/>
    <property type="project" value="UniProtKB-KW"/>
</dbReference>
<dbReference type="GO" id="GO:0005840">
    <property type="term" value="C:ribosome"/>
    <property type="evidence" value="ECO:0007669"/>
    <property type="project" value="UniProtKB-KW"/>
</dbReference>
<dbReference type="GO" id="GO:0019843">
    <property type="term" value="F:rRNA binding"/>
    <property type="evidence" value="ECO:0007669"/>
    <property type="project" value="UniProtKB-UniRule"/>
</dbReference>
<dbReference type="GO" id="GO:0003735">
    <property type="term" value="F:structural constituent of ribosome"/>
    <property type="evidence" value="ECO:0007669"/>
    <property type="project" value="InterPro"/>
</dbReference>
<dbReference type="GO" id="GO:0006412">
    <property type="term" value="P:translation"/>
    <property type="evidence" value="ECO:0007669"/>
    <property type="project" value="UniProtKB-UniRule"/>
</dbReference>
<dbReference type="FunFam" id="3.30.70.330:FF:000001">
    <property type="entry name" value="50S ribosomal protein L23"/>
    <property type="match status" value="1"/>
</dbReference>
<dbReference type="Gene3D" id="3.30.70.330">
    <property type="match status" value="1"/>
</dbReference>
<dbReference type="HAMAP" id="MF_01369_B">
    <property type="entry name" value="Ribosomal_uL23_B"/>
    <property type="match status" value="1"/>
</dbReference>
<dbReference type="InterPro" id="IPR012677">
    <property type="entry name" value="Nucleotide-bd_a/b_plait_sf"/>
</dbReference>
<dbReference type="InterPro" id="IPR013025">
    <property type="entry name" value="Ribosomal_uL23-like"/>
</dbReference>
<dbReference type="InterPro" id="IPR012678">
    <property type="entry name" value="Ribosomal_uL23/eL15/eS24_sf"/>
</dbReference>
<dbReference type="NCBIfam" id="NF004363">
    <property type="entry name" value="PRK05738.2-4"/>
    <property type="match status" value="1"/>
</dbReference>
<dbReference type="PANTHER" id="PTHR11620">
    <property type="entry name" value="60S RIBOSOMAL PROTEIN L23A"/>
    <property type="match status" value="1"/>
</dbReference>
<dbReference type="Pfam" id="PF00276">
    <property type="entry name" value="Ribosomal_L23"/>
    <property type="match status" value="1"/>
</dbReference>
<dbReference type="SUPFAM" id="SSF54189">
    <property type="entry name" value="Ribosomal proteins S24e, L23 and L15e"/>
    <property type="match status" value="1"/>
</dbReference>
<name>RL23_LISMF</name>